<sequence>MSAAQGWDRNRRRGGGAAGGGGGGSGAGGGSGGNGGRGTGQLNRFVQLSGRPHLPGKKKIRWDPVRRRFIQSCPIIRIPNRFLRGHRPPPARSGHRCVADNTNLYVFGGYNPDYDESGGPDNEDYPLFRELWRYHFATGVWHQMGTDGYMPRELASMSLVLHGNNLLVFGGTGIPFGESNGNDVHVCNVKYKRWALLSCRGKKPSRIYGQAMAIINGSLYVFGGTTGYIYSTDLHKLDLNTREWTQLKPNNLSCDLPEERYRHEIAHDGQRIYILGGGTSWTAYSLNKIHAYNLETNAWEEIATKPHEKIGFPAARRCHSCVQIKNDVFICGGYNGEVILGDIWKLNLQTFQWVKLPATMPEPVYFHCAAVTPAGCMYIHGGVVNIHENKRTGSLFKIWLVVPSLLELAWEKLLAAFPNLANLSRTQLLHLGLTQGLIERLK</sequence>
<dbReference type="EMBL" id="BC122712">
    <property type="protein sequence ID" value="AAI22713.1"/>
    <property type="molecule type" value="mRNA"/>
</dbReference>
<dbReference type="RefSeq" id="NP_001068695.1">
    <property type="nucleotide sequence ID" value="NM_001075227.1"/>
</dbReference>
<dbReference type="SMR" id="Q0IIC2"/>
<dbReference type="FunCoup" id="Q0IIC2">
    <property type="interactions" value="4550"/>
</dbReference>
<dbReference type="STRING" id="9913.ENSBTAP00000000718"/>
<dbReference type="PaxDb" id="9913-ENSBTAP00000000718"/>
<dbReference type="Ensembl" id="ENSBTAT00000000718.7">
    <property type="protein sequence ID" value="ENSBTAP00000000718.5"/>
    <property type="gene ID" value="ENSBTAG00000000548.7"/>
</dbReference>
<dbReference type="GeneID" id="505844"/>
<dbReference type="KEGG" id="bta:505844"/>
<dbReference type="CTD" id="23008"/>
<dbReference type="VEuPathDB" id="HostDB:ENSBTAG00000000548"/>
<dbReference type="VGNC" id="VGNC:30634">
    <property type="gene designation" value="KLHDC10"/>
</dbReference>
<dbReference type="eggNOG" id="KOG0379">
    <property type="taxonomic scope" value="Eukaryota"/>
</dbReference>
<dbReference type="GeneTree" id="ENSGT00940000155977"/>
<dbReference type="HOGENOM" id="CLU_030914_0_0_1"/>
<dbReference type="InParanoid" id="Q0IIC2"/>
<dbReference type="OMA" id="IHKHYLY"/>
<dbReference type="OrthoDB" id="7676067at2759"/>
<dbReference type="TreeFam" id="TF314081"/>
<dbReference type="UniPathway" id="UPA00143"/>
<dbReference type="Proteomes" id="UP000009136">
    <property type="component" value="Chromosome 4"/>
</dbReference>
<dbReference type="Bgee" id="ENSBTAG00000000548">
    <property type="expression patterns" value="Expressed in spermatid and 106 other cell types or tissues"/>
</dbReference>
<dbReference type="GO" id="GO:0031462">
    <property type="term" value="C:Cul2-RING ubiquitin ligase complex"/>
    <property type="evidence" value="ECO:0000250"/>
    <property type="project" value="UniProtKB"/>
</dbReference>
<dbReference type="GO" id="GO:0005737">
    <property type="term" value="C:cytoplasm"/>
    <property type="evidence" value="ECO:0007669"/>
    <property type="project" value="UniProtKB-SubCell"/>
</dbReference>
<dbReference type="GO" id="GO:0005654">
    <property type="term" value="C:nucleoplasm"/>
    <property type="evidence" value="ECO:0007669"/>
    <property type="project" value="Ensembl"/>
</dbReference>
<dbReference type="GO" id="GO:1990756">
    <property type="term" value="F:ubiquitin-like ligase-substrate adaptor activity"/>
    <property type="evidence" value="ECO:0000250"/>
    <property type="project" value="UniProtKB"/>
</dbReference>
<dbReference type="GO" id="GO:0032874">
    <property type="term" value="P:positive regulation of stress-activated MAPK cascade"/>
    <property type="evidence" value="ECO:0000318"/>
    <property type="project" value="GO_Central"/>
</dbReference>
<dbReference type="GO" id="GO:0016567">
    <property type="term" value="P:protein ubiquitination"/>
    <property type="evidence" value="ECO:0007669"/>
    <property type="project" value="UniProtKB-UniPathway"/>
</dbReference>
<dbReference type="GO" id="GO:0072344">
    <property type="term" value="P:rescue of stalled ribosome"/>
    <property type="evidence" value="ECO:0000250"/>
    <property type="project" value="UniProtKB"/>
</dbReference>
<dbReference type="GO" id="GO:0140627">
    <property type="term" value="P:ubiquitin-dependent protein catabolic process via the C-end degron rule pathway"/>
    <property type="evidence" value="ECO:0000250"/>
    <property type="project" value="UniProtKB"/>
</dbReference>
<dbReference type="FunFam" id="2.120.10.80:FF:000009">
    <property type="entry name" value="Kelch domain-containing protein 10"/>
    <property type="match status" value="1"/>
</dbReference>
<dbReference type="FunFam" id="2.120.10.80:FF:000010">
    <property type="entry name" value="kelch domain-containing protein 10"/>
    <property type="match status" value="1"/>
</dbReference>
<dbReference type="Gene3D" id="2.120.10.80">
    <property type="entry name" value="Kelch-type beta propeller"/>
    <property type="match status" value="2"/>
</dbReference>
<dbReference type="InterPro" id="IPR015915">
    <property type="entry name" value="Kelch-typ_b-propeller"/>
</dbReference>
<dbReference type="InterPro" id="IPR006652">
    <property type="entry name" value="Kelch_1"/>
</dbReference>
<dbReference type="InterPro" id="IPR052125">
    <property type="entry name" value="KLHDC10"/>
</dbReference>
<dbReference type="PANTHER" id="PTHR46428">
    <property type="entry name" value="KELCH DOMAIN-CONTAINING PROTEIN 10"/>
    <property type="match status" value="1"/>
</dbReference>
<dbReference type="PANTHER" id="PTHR46428:SF1">
    <property type="entry name" value="KELCH DOMAIN-CONTAINING PROTEIN 10"/>
    <property type="match status" value="1"/>
</dbReference>
<dbReference type="Pfam" id="PF13418">
    <property type="entry name" value="Kelch_4"/>
    <property type="match status" value="1"/>
</dbReference>
<dbReference type="Pfam" id="PF24681">
    <property type="entry name" value="Kelch_KLHDC2_KLHL20_DRC7"/>
    <property type="match status" value="1"/>
</dbReference>
<dbReference type="SMART" id="SM00612">
    <property type="entry name" value="Kelch"/>
    <property type="match status" value="2"/>
</dbReference>
<dbReference type="SUPFAM" id="SSF117281">
    <property type="entry name" value="Kelch motif"/>
    <property type="match status" value="1"/>
</dbReference>
<dbReference type="SUPFAM" id="SSF101898">
    <property type="entry name" value="NHL repeat"/>
    <property type="match status" value="1"/>
</dbReference>
<reference key="1">
    <citation type="submission" date="2006-08" db="EMBL/GenBank/DDBJ databases">
        <authorList>
            <consortium name="NIH - Mammalian Gene Collection (MGC) project"/>
        </authorList>
    </citation>
    <scope>NUCLEOTIDE SEQUENCE [LARGE SCALE MRNA]</scope>
    <source>
        <strain>Crossbred X Angus</strain>
        <tissue>Liver</tissue>
    </source>
</reference>
<evidence type="ECO:0000250" key="1">
    <source>
        <dbReference type="UniProtKB" id="Q6PAR0"/>
    </source>
</evidence>
<evidence type="ECO:0000250" key="2">
    <source>
        <dbReference type="UniProtKB" id="Q6PID8"/>
    </source>
</evidence>
<evidence type="ECO:0000256" key="3">
    <source>
        <dbReference type="SAM" id="MobiDB-lite"/>
    </source>
</evidence>
<evidence type="ECO:0000305" key="4"/>
<name>KLD10_BOVIN</name>
<accession>Q0IIC2</accession>
<proteinExistence type="evidence at transcript level"/>
<gene>
    <name type="primary">KLHDC10</name>
</gene>
<feature type="chain" id="PRO_0000319435" description="Kelch domain-containing protein 10">
    <location>
        <begin position="1"/>
        <end position="442"/>
    </location>
</feature>
<feature type="repeat" description="Kelch 1" evidence="2">
    <location>
        <begin position="87"/>
        <end position="154"/>
    </location>
</feature>
<feature type="repeat" description="Kelch 2" evidence="2">
    <location>
        <begin position="155"/>
        <end position="198"/>
    </location>
</feature>
<feature type="repeat" description="Kelch 3" evidence="2">
    <location>
        <begin position="199"/>
        <end position="260"/>
    </location>
</feature>
<feature type="repeat" description="Kelch 4" evidence="2">
    <location>
        <begin position="261"/>
        <end position="319"/>
    </location>
</feature>
<feature type="repeat" description="Kelch 5" evidence="2">
    <location>
        <begin position="320"/>
        <end position="364"/>
    </location>
</feature>
<feature type="repeat" description="Kelch 6" evidence="2">
    <location>
        <begin position="365"/>
        <end position="403"/>
    </location>
</feature>
<feature type="region of interest" description="Disordered" evidence="3">
    <location>
        <begin position="1"/>
        <end position="58"/>
    </location>
</feature>
<feature type="region of interest" description="Interaction with CUL2" evidence="2">
    <location>
        <begin position="401"/>
        <end position="442"/>
    </location>
</feature>
<feature type="compositionally biased region" description="Gly residues" evidence="3">
    <location>
        <begin position="15"/>
        <end position="39"/>
    </location>
</feature>
<feature type="modified residue" description="Omega-N-methylarginine" evidence="1">
    <location>
        <position position="13"/>
    </location>
</feature>
<protein>
    <recommendedName>
        <fullName>Kelch domain-containing protein 10</fullName>
    </recommendedName>
</protein>
<organism>
    <name type="scientific">Bos taurus</name>
    <name type="common">Bovine</name>
    <dbReference type="NCBI Taxonomy" id="9913"/>
    <lineage>
        <taxon>Eukaryota</taxon>
        <taxon>Metazoa</taxon>
        <taxon>Chordata</taxon>
        <taxon>Craniata</taxon>
        <taxon>Vertebrata</taxon>
        <taxon>Euteleostomi</taxon>
        <taxon>Mammalia</taxon>
        <taxon>Eutheria</taxon>
        <taxon>Laurasiatheria</taxon>
        <taxon>Artiodactyla</taxon>
        <taxon>Ruminantia</taxon>
        <taxon>Pecora</taxon>
        <taxon>Bovidae</taxon>
        <taxon>Bovinae</taxon>
        <taxon>Bos</taxon>
    </lineage>
</organism>
<comment type="function">
    <text evidence="1 2">Substrate-recognition component of a Cul2-RING (CRL2) E3 ubiquitin-protein ligase complex of the DesCEND (destruction via C-end degrons) pathway, which recognizes a C-degron located at the extreme C-terminus of target proteins, leading to their ubiquitination and degradation (By similarity). The C-degron recognized by the DesCEND pathway is usually a motif of less than ten residues and can be present in full-length proteins, truncated proteins or proteolytically cleaved forms (By similarity). The CRL2(KLHDC10) complex specifically recognizes proteins with a proline-glycine (Pro-Gly) or an alanine tail (CAT tail) at the C-terminus, leading to their ubiquitination and degradation (By similarity). The CRL2(KLHDC10) complex is involved in the ribosome-associated quality control (RQC) pathway, which mediates the extraction of incompletely synthesized nascent chains from stalled ribosomes: CRL2(KLHDC10) acts downstream of NEMF and recognizes CAT tails associated with stalled nascent chains, leading to their ubiquitination and degradation (By similarity). Participates in the oxidative stress-induced cell death through MAP3K5 activation. Inhibits PPP5C phosphatase activity on MAP3K5 (By similarity). Acts as a regulator of necroptosis (By similarity).</text>
</comment>
<comment type="pathway">
    <text evidence="2">Protein modification; protein ubiquitination.</text>
</comment>
<comment type="subunit">
    <text evidence="2">Component of a CRL2 E3 ubiquitin-protein ligase complex, also named ECS (Elongin BC-CUL2/5-SOCS-box protein) complex, composed of CUL2, Elongin BC (ELOB and ELOC), RBX1 and substrate-specific adapter KLHDC10. Interacts (via the 6 Kelch repeats) with PPP5C.</text>
</comment>
<comment type="subcellular location">
    <subcellularLocation>
        <location evidence="2">Nucleus</location>
    </subcellularLocation>
    <subcellularLocation>
        <location evidence="2">Cytoplasm</location>
    </subcellularLocation>
</comment>
<comment type="similarity">
    <text evidence="4">Belongs to the KLHDC10 family.</text>
</comment>
<keyword id="KW-0963">Cytoplasm</keyword>
<keyword id="KW-0880">Kelch repeat</keyword>
<keyword id="KW-0488">Methylation</keyword>
<keyword id="KW-0539">Nucleus</keyword>
<keyword id="KW-1185">Reference proteome</keyword>
<keyword id="KW-0677">Repeat</keyword>
<keyword id="KW-0833">Ubl conjugation pathway</keyword>